<proteinExistence type="inferred from homology"/>
<evidence type="ECO:0000255" key="1">
    <source>
        <dbReference type="HAMAP-Rule" id="MF_01682"/>
    </source>
</evidence>
<sequence length="180" mass="20622">MAVIKVRKTGQVIEGEDNVRAFLNSQGVLYEHWDITKLPEHLRDKYVLTDEEKNEILATFKDEIEDLAARRGYKTWDIVALSDATPNLDELLKKFEQVHIHTEDEVRAITAGHGIFIIKGDKETGYFDVELEAGDVISVPEGNPHYFTLMDDRRVVAVRLFIDPSGWVAHPYEEKEEAVQ</sequence>
<accession>Q5L1D9</accession>
<feature type="chain" id="PRO_0000359193" description="Acireductone dioxygenase">
    <location>
        <begin position="1"/>
        <end position="180"/>
    </location>
</feature>
<feature type="binding site" evidence="1">
    <location>
        <position position="99"/>
    </location>
    <ligand>
        <name>Fe(2+)</name>
        <dbReference type="ChEBI" id="CHEBI:29033"/>
    </ligand>
</feature>
<feature type="binding site" evidence="1">
    <location>
        <position position="99"/>
    </location>
    <ligand>
        <name>Ni(2+)</name>
        <dbReference type="ChEBI" id="CHEBI:49786"/>
    </ligand>
</feature>
<feature type="binding site" evidence="1">
    <location>
        <position position="101"/>
    </location>
    <ligand>
        <name>Fe(2+)</name>
        <dbReference type="ChEBI" id="CHEBI:29033"/>
    </ligand>
</feature>
<feature type="binding site" evidence="1">
    <location>
        <position position="101"/>
    </location>
    <ligand>
        <name>Ni(2+)</name>
        <dbReference type="ChEBI" id="CHEBI:49786"/>
    </ligand>
</feature>
<feature type="binding site" evidence="1">
    <location>
        <position position="105"/>
    </location>
    <ligand>
        <name>Fe(2+)</name>
        <dbReference type="ChEBI" id="CHEBI:29033"/>
    </ligand>
</feature>
<feature type="binding site" evidence="1">
    <location>
        <position position="105"/>
    </location>
    <ligand>
        <name>Ni(2+)</name>
        <dbReference type="ChEBI" id="CHEBI:49786"/>
    </ligand>
</feature>
<feature type="binding site" evidence="1">
    <location>
        <position position="145"/>
    </location>
    <ligand>
        <name>Fe(2+)</name>
        <dbReference type="ChEBI" id="CHEBI:29033"/>
    </ligand>
</feature>
<feature type="binding site" evidence="1">
    <location>
        <position position="145"/>
    </location>
    <ligand>
        <name>Ni(2+)</name>
        <dbReference type="ChEBI" id="CHEBI:49786"/>
    </ligand>
</feature>
<feature type="site" description="May play a role in transmitting local conformational changes" evidence="1">
    <location>
        <position position="104"/>
    </location>
</feature>
<feature type="site" description="Important to generate the dianion" evidence="1">
    <location>
        <position position="107"/>
    </location>
</feature>
<reference key="1">
    <citation type="journal article" date="2004" name="Nucleic Acids Res.">
        <title>Thermoadaptation trait revealed by the genome sequence of thermophilic Geobacillus kaustophilus.</title>
        <authorList>
            <person name="Takami H."/>
            <person name="Takaki Y."/>
            <person name="Chee G.-J."/>
            <person name="Nishi S."/>
            <person name="Shimamura S."/>
            <person name="Suzuki H."/>
            <person name="Matsui S."/>
            <person name="Uchiyama I."/>
        </authorList>
    </citation>
    <scope>NUCLEOTIDE SEQUENCE [LARGE SCALE GENOMIC DNA]</scope>
    <source>
        <strain>HTA426</strain>
    </source>
</reference>
<gene>
    <name evidence="1" type="primary">mtnD</name>
    <name type="ordered locus">GK0956</name>
</gene>
<dbReference type="EC" id="1.13.11.54" evidence="1"/>
<dbReference type="EC" id="1.13.11.53" evidence="1"/>
<dbReference type="EMBL" id="BA000043">
    <property type="protein sequence ID" value="BAD75241.1"/>
    <property type="molecule type" value="Genomic_DNA"/>
</dbReference>
<dbReference type="RefSeq" id="WP_011230457.1">
    <property type="nucleotide sequence ID" value="NC_006510.1"/>
</dbReference>
<dbReference type="SMR" id="Q5L1D9"/>
<dbReference type="STRING" id="235909.GK0956"/>
<dbReference type="KEGG" id="gka:GK0956"/>
<dbReference type="eggNOG" id="COG1791">
    <property type="taxonomic scope" value="Bacteria"/>
</dbReference>
<dbReference type="HOGENOM" id="CLU_125400_0_0_9"/>
<dbReference type="UniPathway" id="UPA00904">
    <property type="reaction ID" value="UER00878"/>
</dbReference>
<dbReference type="Proteomes" id="UP000001172">
    <property type="component" value="Chromosome"/>
</dbReference>
<dbReference type="GO" id="GO:0010308">
    <property type="term" value="F:acireductone dioxygenase (Ni2+-requiring) activity"/>
    <property type="evidence" value="ECO:0007669"/>
    <property type="project" value="UniProtKB-UniRule"/>
</dbReference>
<dbReference type="GO" id="GO:0010309">
    <property type="term" value="F:acireductone dioxygenase [iron(II)-requiring] activity"/>
    <property type="evidence" value="ECO:0007669"/>
    <property type="project" value="UniProtKB-UniRule"/>
</dbReference>
<dbReference type="GO" id="GO:0005506">
    <property type="term" value="F:iron ion binding"/>
    <property type="evidence" value="ECO:0007669"/>
    <property type="project" value="UniProtKB-UniRule"/>
</dbReference>
<dbReference type="GO" id="GO:0016151">
    <property type="term" value="F:nickel cation binding"/>
    <property type="evidence" value="ECO:0007669"/>
    <property type="project" value="UniProtKB-UniRule"/>
</dbReference>
<dbReference type="GO" id="GO:0019509">
    <property type="term" value="P:L-methionine salvage from methylthioadenosine"/>
    <property type="evidence" value="ECO:0007669"/>
    <property type="project" value="UniProtKB-UniRule"/>
</dbReference>
<dbReference type="GO" id="GO:0019284">
    <property type="term" value="P:L-methionine salvage from S-adenosylmethionine"/>
    <property type="evidence" value="ECO:0007669"/>
    <property type="project" value="InterPro"/>
</dbReference>
<dbReference type="CDD" id="cd02232">
    <property type="entry name" value="cupin_ARD"/>
    <property type="match status" value="1"/>
</dbReference>
<dbReference type="Gene3D" id="2.60.120.10">
    <property type="entry name" value="Jelly Rolls"/>
    <property type="match status" value="1"/>
</dbReference>
<dbReference type="HAMAP" id="MF_01682">
    <property type="entry name" value="Salvage_MtnD"/>
    <property type="match status" value="1"/>
</dbReference>
<dbReference type="InterPro" id="IPR004313">
    <property type="entry name" value="ARD"/>
</dbReference>
<dbReference type="InterPro" id="IPR023956">
    <property type="entry name" value="ARD_bac"/>
</dbReference>
<dbReference type="InterPro" id="IPR014710">
    <property type="entry name" value="RmlC-like_jellyroll"/>
</dbReference>
<dbReference type="InterPro" id="IPR011051">
    <property type="entry name" value="RmlC_Cupin_sf"/>
</dbReference>
<dbReference type="PANTHER" id="PTHR23418">
    <property type="entry name" value="ACIREDUCTONE DIOXYGENASE"/>
    <property type="match status" value="1"/>
</dbReference>
<dbReference type="PANTHER" id="PTHR23418:SF0">
    <property type="entry name" value="ACIREDUCTONE DIOXYGENASE"/>
    <property type="match status" value="1"/>
</dbReference>
<dbReference type="Pfam" id="PF03079">
    <property type="entry name" value="ARD"/>
    <property type="match status" value="1"/>
</dbReference>
<dbReference type="SUPFAM" id="SSF51182">
    <property type="entry name" value="RmlC-like cupins"/>
    <property type="match status" value="1"/>
</dbReference>
<name>MTND_GEOKA</name>
<organism>
    <name type="scientific">Geobacillus kaustophilus (strain HTA426)</name>
    <dbReference type="NCBI Taxonomy" id="235909"/>
    <lineage>
        <taxon>Bacteria</taxon>
        <taxon>Bacillati</taxon>
        <taxon>Bacillota</taxon>
        <taxon>Bacilli</taxon>
        <taxon>Bacillales</taxon>
        <taxon>Anoxybacillaceae</taxon>
        <taxon>Geobacillus</taxon>
        <taxon>Geobacillus thermoleovorans group</taxon>
    </lineage>
</organism>
<protein>
    <recommendedName>
        <fullName evidence="1">Acireductone dioxygenase</fullName>
    </recommendedName>
    <alternativeName>
        <fullName evidence="1">1,2-dihydroxy-3-keto-5-methylthiopentene dioxygenase</fullName>
        <shortName evidence="1">DHK-MTPene dioxygenase</shortName>
    </alternativeName>
    <alternativeName>
        <fullName evidence="1">Acireductone dioxygenase (Fe(2+)-requiring)</fullName>
        <shortName evidence="1">ARD'</shortName>
        <shortName evidence="1">Fe-ARD</shortName>
        <ecNumber evidence="1">1.13.11.54</ecNumber>
    </alternativeName>
    <alternativeName>
        <fullName evidence="1">Acireductone dioxygenase (Ni(2+)-requiring)</fullName>
        <shortName evidence="1">ARD</shortName>
        <shortName evidence="1">Ni-ARD</shortName>
        <ecNumber evidence="1">1.13.11.53</ecNumber>
    </alternativeName>
</protein>
<comment type="function">
    <text evidence="1">Catalyzes 2 different reactions between oxygen and the acireductone 1,2-dihydroxy-3-keto-5-methylthiopentene (DHK-MTPene) depending upon the metal bound in the active site. Fe-containing acireductone dioxygenase (Fe-ARD) produces formate and 2-keto-4-methylthiobutyrate (KMTB), the alpha-ketoacid precursor of methionine in the methionine recycle pathway. Ni-containing acireductone dioxygenase (Ni-ARD) produces methylthiopropionate, carbon monoxide and formate, and does not lie on the methionine recycle pathway.</text>
</comment>
<comment type="catalytic activity">
    <reaction evidence="1">
        <text>1,2-dihydroxy-5-(methylsulfanyl)pent-1-en-3-one + O2 = 3-(methylsulfanyl)propanoate + CO + formate + 2 H(+)</text>
        <dbReference type="Rhea" id="RHEA:14161"/>
        <dbReference type="ChEBI" id="CHEBI:15378"/>
        <dbReference type="ChEBI" id="CHEBI:15379"/>
        <dbReference type="ChEBI" id="CHEBI:15740"/>
        <dbReference type="ChEBI" id="CHEBI:17245"/>
        <dbReference type="ChEBI" id="CHEBI:49016"/>
        <dbReference type="ChEBI" id="CHEBI:49252"/>
        <dbReference type="EC" id="1.13.11.53"/>
    </reaction>
</comment>
<comment type="catalytic activity">
    <reaction evidence="1">
        <text>1,2-dihydroxy-5-(methylsulfanyl)pent-1-en-3-one + O2 = 4-methylsulfanyl-2-oxobutanoate + formate + 2 H(+)</text>
        <dbReference type="Rhea" id="RHEA:24504"/>
        <dbReference type="ChEBI" id="CHEBI:15378"/>
        <dbReference type="ChEBI" id="CHEBI:15379"/>
        <dbReference type="ChEBI" id="CHEBI:15740"/>
        <dbReference type="ChEBI" id="CHEBI:16723"/>
        <dbReference type="ChEBI" id="CHEBI:49252"/>
        <dbReference type="EC" id="1.13.11.54"/>
    </reaction>
</comment>
<comment type="cofactor">
    <cofactor evidence="1">
        <name>Fe(2+)</name>
        <dbReference type="ChEBI" id="CHEBI:29033"/>
    </cofactor>
    <text evidence="1">Binds 1 Fe(2+) cation per monomer.</text>
</comment>
<comment type="cofactor">
    <cofactor evidence="1">
        <name>Ni(2+)</name>
        <dbReference type="ChEBI" id="CHEBI:49786"/>
    </cofactor>
    <text evidence="1">Binds 1 nickel ion per monomer.</text>
</comment>
<comment type="pathway">
    <text evidence="1">Amino-acid biosynthesis; L-methionine biosynthesis via salvage pathway; L-methionine from S-methyl-5-thio-alpha-D-ribose 1-phosphate: step 5/6.</text>
</comment>
<comment type="subunit">
    <text evidence="1">Monomer.</text>
</comment>
<comment type="similarity">
    <text evidence="1">Belongs to the acireductone dioxygenase (ARD) family.</text>
</comment>
<keyword id="KW-0028">Amino-acid biosynthesis</keyword>
<keyword id="KW-0223">Dioxygenase</keyword>
<keyword id="KW-0408">Iron</keyword>
<keyword id="KW-0479">Metal-binding</keyword>
<keyword id="KW-0486">Methionine biosynthesis</keyword>
<keyword id="KW-0533">Nickel</keyword>
<keyword id="KW-0560">Oxidoreductase</keyword>
<keyword id="KW-1185">Reference proteome</keyword>